<reference key="1">
    <citation type="journal article" date="2001" name="J. Biol. Chem.">
        <title>Discovery and structure of a potent and highly specific blocker of insect calcium channels.</title>
        <authorList>
            <person name="Wang X.-H."/>
            <person name="Connor M."/>
            <person name="Wilson D."/>
            <person name="Wilson H.I."/>
            <person name="Nicholson G.M."/>
            <person name="Smith R."/>
            <person name="Shaw D."/>
            <person name="Mackay J.P."/>
            <person name="Alewood P.F."/>
            <person name="Christie M.J."/>
            <person name="King G.F."/>
        </authorList>
    </citation>
    <scope>NUCLEOTIDE SEQUENCE [MRNA]</scope>
    <source>
        <tissue>Venom gland</tissue>
    </source>
</reference>
<proteinExistence type="inferred from homology"/>
<feature type="signal peptide" evidence="3">
    <location>
        <begin position="1"/>
        <end position="23"/>
    </location>
</feature>
<feature type="propeptide" id="PRO_0000035553" evidence="1">
    <location>
        <begin position="24"/>
        <end position="55"/>
    </location>
</feature>
<feature type="chain" id="PRO_0000035554" description="Omega-hexatoxin-Asp2b">
    <location>
        <begin position="56"/>
        <end position="100"/>
    </location>
</feature>
<feature type="disulfide bond" evidence="2">
    <location>
        <begin position="60"/>
        <end position="73"/>
    </location>
</feature>
<feature type="disulfide bond" evidence="2">
    <location>
        <begin position="66"/>
        <end position="79"/>
    </location>
</feature>
<feature type="disulfide bond" evidence="2">
    <location>
        <begin position="72"/>
        <end position="84"/>
    </location>
</feature>
<organism>
    <name type="scientific">Atrax sp. (strain Illawarra)</name>
    <name type="common">Funnel-web spider</name>
    <dbReference type="NCBI Taxonomy" id="153482"/>
    <lineage>
        <taxon>Eukaryota</taxon>
        <taxon>Metazoa</taxon>
        <taxon>Ecdysozoa</taxon>
        <taxon>Arthropoda</taxon>
        <taxon>Chelicerata</taxon>
        <taxon>Arachnida</taxon>
        <taxon>Araneae</taxon>
        <taxon>Mygalomorphae</taxon>
        <taxon>Hexathelidae</taxon>
        <taxon>Atrax</taxon>
    </lineage>
</organism>
<comment type="function">
    <text evidence="2">Potent inhibitor of insect, but not mammalian, voltage-gated calcium channels (Cav).</text>
</comment>
<comment type="subcellular location">
    <subcellularLocation>
        <location evidence="5">Secreted</location>
    </subcellularLocation>
</comment>
<comment type="tissue specificity">
    <text evidence="5">Expressed by the venom gland.</text>
</comment>
<comment type="domain">
    <text evidence="4">The presence of a 'disulfide through disulfide knot' structurally defines this protein as a knottin.</text>
</comment>
<comment type="similarity">
    <text evidence="4">Belongs to the neurotoxin 15 family. 02 (omega-actx) subfamily.</text>
</comment>
<dbReference type="EMBL" id="AF329445">
    <property type="protein sequence ID" value="AAK17948.1"/>
    <property type="molecule type" value="mRNA"/>
</dbReference>
<dbReference type="ArachnoServer" id="AS000205">
    <property type="toxin name" value="omega-hexatoxin-Asp2b"/>
</dbReference>
<dbReference type="GO" id="GO:0005576">
    <property type="term" value="C:extracellular region"/>
    <property type="evidence" value="ECO:0007669"/>
    <property type="project" value="UniProtKB-SubCell"/>
</dbReference>
<dbReference type="GO" id="GO:0005246">
    <property type="term" value="F:calcium channel regulator activity"/>
    <property type="evidence" value="ECO:0007669"/>
    <property type="project" value="UniProtKB-KW"/>
</dbReference>
<dbReference type="GO" id="GO:0019871">
    <property type="term" value="F:sodium channel inhibitor activity"/>
    <property type="evidence" value="ECO:0007669"/>
    <property type="project" value="InterPro"/>
</dbReference>
<dbReference type="GO" id="GO:0090729">
    <property type="term" value="F:toxin activity"/>
    <property type="evidence" value="ECO:0007669"/>
    <property type="project" value="UniProtKB-KW"/>
</dbReference>
<dbReference type="Gene3D" id="4.10.40.10">
    <property type="match status" value="1"/>
</dbReference>
<dbReference type="InterPro" id="IPR013139">
    <property type="entry name" value="Omega_atracotoxin_CS2"/>
</dbReference>
<dbReference type="InterPro" id="IPR012628">
    <property type="entry name" value="Toxin_23"/>
</dbReference>
<dbReference type="Pfam" id="PF08093">
    <property type="entry name" value="Toxin_23"/>
    <property type="match status" value="1"/>
</dbReference>
<dbReference type="SUPFAM" id="SSF57059">
    <property type="entry name" value="omega toxin-like"/>
    <property type="match status" value="1"/>
</dbReference>
<dbReference type="PROSITE" id="PS60017">
    <property type="entry name" value="OMEGA_ACTX_2"/>
    <property type="match status" value="1"/>
</dbReference>
<evidence type="ECO:0000250" key="1"/>
<evidence type="ECO:0000250" key="2">
    <source>
        <dbReference type="UniProtKB" id="P82852"/>
    </source>
</evidence>
<evidence type="ECO:0000255" key="3"/>
<evidence type="ECO:0000305" key="4"/>
<evidence type="ECO:0000305" key="5">
    <source>
    </source>
</evidence>
<accession>Q9BJV7</accession>
<keyword id="KW-0108">Calcium channel impairing toxin</keyword>
<keyword id="KW-1015">Disulfide bond</keyword>
<keyword id="KW-0872">Ion channel impairing toxin</keyword>
<keyword id="KW-0960">Knottin</keyword>
<keyword id="KW-0528">Neurotoxin</keyword>
<keyword id="KW-0964">Secreted</keyword>
<keyword id="KW-0732">Signal</keyword>
<keyword id="KW-0800">Toxin</keyword>
<keyword id="KW-1218">Voltage-gated calcium channel impairing toxin</keyword>
<sequence length="100" mass="10587">MKFSKLSITLAVILTQAVFVLCGMKNEDFMEKGLESNELHDAIKKPVNSGKPDTERLLDCVLSRVCSSDANCCGLTPTCKMGLCVPKVGGLLGGLLGGIL</sequence>
<protein>
    <recommendedName>
        <fullName>Omega-hexatoxin-Asp2b</fullName>
        <shortName>Omega-HXTX-Asp2b</shortName>
    </recommendedName>
    <alternativeName>
        <fullName>Omega-atracotoxin-As2b</fullName>
        <shortName>Omega-AcTx-As2b</shortName>
    </alternativeName>
</protein>
<name>TOT2B_ATRIL</name>